<sequence length="523" mass="55986">MSLQTNHRPVLVVDFGAQYAQLIARRVREAGIYSEVIPHTATADDVRAKNAAALVLSGGPSSVYAEGAPSLDAEILDLGLPVFGICYGFQAMTHALGGTVANTGKREYGRTDINVAGGVLHEGLEACHKVWMSHGDAVSEAPEGFVVTASSEGAPVAAFENKERKMAGVQYHPEVLHSPHGQAVLTRFLTEIAGLEQNWTAANIAEELIEKVREQIGEDGRAICGLSGGVDSAVAGALVQRAIGDRLTCVFVDHGLLRAGEREQVEKDFVAATGAKLVTVDERQAFLSKLAGVTEPEAKRKAIGAEFIRSFERAVAGVLEEAPEGSTVDFLVQGTLYPDVVESGGGSGTANIKSHHNVGGLPDDVEFKLVEPLRDLFKDEVRAVGRELGLPEEIVGRQPFPGPGLGIRIIGEVTEDRLETLRHADLIARTELTEAGLDGVIWQCPVVLLADVRSVGVQGDGRTYGHPIVLRPVSSEDAMTADWTRLPYEVLEKISTRITNEVPDVNRVVLDVTSKPPGTIEWE</sequence>
<organism>
    <name type="scientific">Corynebacterium glutamicum (strain ATCC 13032 / DSM 20300 / JCM 1318 / BCRC 11384 / CCUG 27702 / LMG 3730 / NBRC 12168 / NCIMB 10025 / NRRL B-2784 / 534)</name>
    <dbReference type="NCBI Taxonomy" id="196627"/>
    <lineage>
        <taxon>Bacteria</taxon>
        <taxon>Bacillati</taxon>
        <taxon>Actinomycetota</taxon>
        <taxon>Actinomycetes</taxon>
        <taxon>Mycobacteriales</taxon>
        <taxon>Corynebacteriaceae</taxon>
        <taxon>Corynebacterium</taxon>
    </lineage>
</organism>
<evidence type="ECO:0000255" key="1">
    <source>
        <dbReference type="HAMAP-Rule" id="MF_00344"/>
    </source>
</evidence>
<keyword id="KW-0067">ATP-binding</keyword>
<keyword id="KW-0315">Glutamine amidotransferase</keyword>
<keyword id="KW-0332">GMP biosynthesis</keyword>
<keyword id="KW-0436">Ligase</keyword>
<keyword id="KW-0547">Nucleotide-binding</keyword>
<keyword id="KW-0658">Purine biosynthesis</keyword>
<keyword id="KW-1185">Reference proteome</keyword>
<protein>
    <recommendedName>
        <fullName evidence="1">GMP synthase [glutamine-hydrolyzing]</fullName>
        <ecNumber evidence="1">6.3.5.2</ecNumber>
    </recommendedName>
    <alternativeName>
        <fullName evidence="1">GMP synthetase</fullName>
    </alternativeName>
    <alternativeName>
        <fullName evidence="1">Glutamine amidotransferase</fullName>
    </alternativeName>
</protein>
<name>GUAA_CORGL</name>
<gene>
    <name evidence="1" type="primary">guaA</name>
    <name type="ordered locus">Cgl0607</name>
    <name type="ordered locus">cg0703</name>
</gene>
<proteinExistence type="inferred from homology"/>
<reference key="1">
    <citation type="journal article" date="2003" name="Appl. Microbiol. Biotechnol.">
        <title>The Corynebacterium glutamicum genome: features and impacts on biotechnological processes.</title>
        <authorList>
            <person name="Ikeda M."/>
            <person name="Nakagawa S."/>
        </authorList>
    </citation>
    <scope>NUCLEOTIDE SEQUENCE [LARGE SCALE GENOMIC DNA]</scope>
    <source>
        <strain>ATCC 13032 / DSM 20300 / JCM 1318 / BCRC 11384 / CCUG 27702 / LMG 3730 / NBRC 12168 / NCIMB 10025 / NRRL B-2784 / 534</strain>
    </source>
</reference>
<reference key="2">
    <citation type="journal article" date="2003" name="J. Biotechnol.">
        <title>The complete Corynebacterium glutamicum ATCC 13032 genome sequence and its impact on the production of L-aspartate-derived amino acids and vitamins.</title>
        <authorList>
            <person name="Kalinowski J."/>
            <person name="Bathe B."/>
            <person name="Bartels D."/>
            <person name="Bischoff N."/>
            <person name="Bott M."/>
            <person name="Burkovski A."/>
            <person name="Dusch N."/>
            <person name="Eggeling L."/>
            <person name="Eikmanns B.J."/>
            <person name="Gaigalat L."/>
            <person name="Goesmann A."/>
            <person name="Hartmann M."/>
            <person name="Huthmacher K."/>
            <person name="Kraemer R."/>
            <person name="Linke B."/>
            <person name="McHardy A.C."/>
            <person name="Meyer F."/>
            <person name="Moeckel B."/>
            <person name="Pfefferle W."/>
            <person name="Puehler A."/>
            <person name="Rey D.A."/>
            <person name="Rueckert C."/>
            <person name="Rupp O."/>
            <person name="Sahm H."/>
            <person name="Wendisch V.F."/>
            <person name="Wiegraebe I."/>
            <person name="Tauch A."/>
        </authorList>
    </citation>
    <scope>NUCLEOTIDE SEQUENCE [LARGE SCALE GENOMIC DNA]</scope>
    <source>
        <strain>ATCC 13032 / DSM 20300 / JCM 1318 / BCRC 11384 / CCUG 27702 / LMG 3730 / NBRC 12168 / NCIMB 10025 / NRRL B-2784 / 534</strain>
    </source>
</reference>
<feature type="chain" id="PRO_0000140119" description="GMP synthase [glutamine-hydrolyzing]">
    <location>
        <begin position="1"/>
        <end position="523"/>
    </location>
</feature>
<feature type="domain" description="Glutamine amidotransferase type-1" evidence="1">
    <location>
        <begin position="9"/>
        <end position="198"/>
    </location>
</feature>
<feature type="domain" description="GMPS ATP-PPase" evidence="1">
    <location>
        <begin position="199"/>
        <end position="397"/>
    </location>
</feature>
<feature type="active site" description="Nucleophile" evidence="1">
    <location>
        <position position="86"/>
    </location>
</feature>
<feature type="active site" evidence="1">
    <location>
        <position position="172"/>
    </location>
</feature>
<feature type="active site" evidence="1">
    <location>
        <position position="174"/>
    </location>
</feature>
<feature type="binding site" evidence="1">
    <location>
        <begin position="227"/>
        <end position="233"/>
    </location>
    <ligand>
        <name>ATP</name>
        <dbReference type="ChEBI" id="CHEBI:30616"/>
    </ligand>
</feature>
<accession>Q8NSR1</accession>
<comment type="function">
    <text evidence="1">Catalyzes the synthesis of GMP from XMP.</text>
</comment>
<comment type="catalytic activity">
    <reaction evidence="1">
        <text>XMP + L-glutamine + ATP + H2O = GMP + L-glutamate + AMP + diphosphate + 2 H(+)</text>
        <dbReference type="Rhea" id="RHEA:11680"/>
        <dbReference type="ChEBI" id="CHEBI:15377"/>
        <dbReference type="ChEBI" id="CHEBI:15378"/>
        <dbReference type="ChEBI" id="CHEBI:29985"/>
        <dbReference type="ChEBI" id="CHEBI:30616"/>
        <dbReference type="ChEBI" id="CHEBI:33019"/>
        <dbReference type="ChEBI" id="CHEBI:57464"/>
        <dbReference type="ChEBI" id="CHEBI:58115"/>
        <dbReference type="ChEBI" id="CHEBI:58359"/>
        <dbReference type="ChEBI" id="CHEBI:456215"/>
        <dbReference type="EC" id="6.3.5.2"/>
    </reaction>
</comment>
<comment type="pathway">
    <text evidence="1">Purine metabolism; GMP biosynthesis; GMP from XMP (L-Gln route): step 1/1.</text>
</comment>
<comment type="subunit">
    <text evidence="1">Homodimer.</text>
</comment>
<dbReference type="EC" id="6.3.5.2" evidence="1"/>
<dbReference type="EMBL" id="BA000036">
    <property type="protein sequence ID" value="BAB98000.1"/>
    <property type="molecule type" value="Genomic_DNA"/>
</dbReference>
<dbReference type="EMBL" id="BX927149">
    <property type="protein sequence ID" value="CAF19314.1"/>
    <property type="molecule type" value="Genomic_DNA"/>
</dbReference>
<dbReference type="RefSeq" id="NP_599843.1">
    <property type="nucleotide sequence ID" value="NC_003450.3"/>
</dbReference>
<dbReference type="RefSeq" id="WP_011013761.1">
    <property type="nucleotide sequence ID" value="NC_006958.1"/>
</dbReference>
<dbReference type="SMR" id="Q8NSR1"/>
<dbReference type="STRING" id="196627.cg0703"/>
<dbReference type="MEROPS" id="C26.A07"/>
<dbReference type="GeneID" id="1018611"/>
<dbReference type="KEGG" id="cgb:cg0703"/>
<dbReference type="KEGG" id="cgl:Cgl0607"/>
<dbReference type="PATRIC" id="fig|196627.13.peg.598"/>
<dbReference type="eggNOG" id="COG0518">
    <property type="taxonomic scope" value="Bacteria"/>
</dbReference>
<dbReference type="eggNOG" id="COG0519">
    <property type="taxonomic scope" value="Bacteria"/>
</dbReference>
<dbReference type="HOGENOM" id="CLU_014340_0_5_11"/>
<dbReference type="OrthoDB" id="9802219at2"/>
<dbReference type="BioCyc" id="CORYNE:G18NG-10169-MONOMER"/>
<dbReference type="UniPathway" id="UPA00189">
    <property type="reaction ID" value="UER00296"/>
</dbReference>
<dbReference type="Proteomes" id="UP000000582">
    <property type="component" value="Chromosome"/>
</dbReference>
<dbReference type="Proteomes" id="UP000001009">
    <property type="component" value="Chromosome"/>
</dbReference>
<dbReference type="GO" id="GO:0005829">
    <property type="term" value="C:cytosol"/>
    <property type="evidence" value="ECO:0007669"/>
    <property type="project" value="TreeGrafter"/>
</dbReference>
<dbReference type="GO" id="GO:0005524">
    <property type="term" value="F:ATP binding"/>
    <property type="evidence" value="ECO:0007669"/>
    <property type="project" value="UniProtKB-UniRule"/>
</dbReference>
<dbReference type="GO" id="GO:0003921">
    <property type="term" value="F:GMP synthase activity"/>
    <property type="evidence" value="ECO:0007669"/>
    <property type="project" value="InterPro"/>
</dbReference>
<dbReference type="CDD" id="cd01742">
    <property type="entry name" value="GATase1_GMP_Synthase"/>
    <property type="match status" value="1"/>
</dbReference>
<dbReference type="CDD" id="cd01997">
    <property type="entry name" value="GMP_synthase_C"/>
    <property type="match status" value="1"/>
</dbReference>
<dbReference type="FunFam" id="3.30.300.10:FF:000002">
    <property type="entry name" value="GMP synthase [glutamine-hydrolyzing]"/>
    <property type="match status" value="1"/>
</dbReference>
<dbReference type="FunFam" id="3.40.50.620:FF:000001">
    <property type="entry name" value="GMP synthase [glutamine-hydrolyzing]"/>
    <property type="match status" value="1"/>
</dbReference>
<dbReference type="FunFam" id="3.40.50.880:FF:000001">
    <property type="entry name" value="GMP synthase [glutamine-hydrolyzing]"/>
    <property type="match status" value="1"/>
</dbReference>
<dbReference type="Gene3D" id="3.30.300.10">
    <property type="match status" value="1"/>
</dbReference>
<dbReference type="Gene3D" id="3.40.50.880">
    <property type="match status" value="1"/>
</dbReference>
<dbReference type="Gene3D" id="3.40.50.620">
    <property type="entry name" value="HUPs"/>
    <property type="match status" value="1"/>
</dbReference>
<dbReference type="HAMAP" id="MF_00344">
    <property type="entry name" value="GMP_synthase"/>
    <property type="match status" value="1"/>
</dbReference>
<dbReference type="InterPro" id="IPR029062">
    <property type="entry name" value="Class_I_gatase-like"/>
</dbReference>
<dbReference type="InterPro" id="IPR017926">
    <property type="entry name" value="GATASE"/>
</dbReference>
<dbReference type="InterPro" id="IPR001674">
    <property type="entry name" value="GMP_synth_C"/>
</dbReference>
<dbReference type="InterPro" id="IPR004739">
    <property type="entry name" value="GMP_synth_GATase"/>
</dbReference>
<dbReference type="InterPro" id="IPR022955">
    <property type="entry name" value="GMP_synthase"/>
</dbReference>
<dbReference type="InterPro" id="IPR025777">
    <property type="entry name" value="GMPS_ATP_PPase_dom"/>
</dbReference>
<dbReference type="InterPro" id="IPR022310">
    <property type="entry name" value="NAD/GMP_synthase"/>
</dbReference>
<dbReference type="InterPro" id="IPR014729">
    <property type="entry name" value="Rossmann-like_a/b/a_fold"/>
</dbReference>
<dbReference type="NCBIfam" id="TIGR00884">
    <property type="entry name" value="guaA_Cterm"/>
    <property type="match status" value="1"/>
</dbReference>
<dbReference type="NCBIfam" id="TIGR00888">
    <property type="entry name" value="guaA_Nterm"/>
    <property type="match status" value="1"/>
</dbReference>
<dbReference type="NCBIfam" id="NF000848">
    <property type="entry name" value="PRK00074.1"/>
    <property type="match status" value="1"/>
</dbReference>
<dbReference type="PANTHER" id="PTHR11922:SF2">
    <property type="entry name" value="GMP SYNTHASE [GLUTAMINE-HYDROLYZING]"/>
    <property type="match status" value="1"/>
</dbReference>
<dbReference type="PANTHER" id="PTHR11922">
    <property type="entry name" value="GMP SYNTHASE-RELATED"/>
    <property type="match status" value="1"/>
</dbReference>
<dbReference type="Pfam" id="PF00117">
    <property type="entry name" value="GATase"/>
    <property type="match status" value="1"/>
</dbReference>
<dbReference type="Pfam" id="PF00958">
    <property type="entry name" value="GMP_synt_C"/>
    <property type="match status" value="1"/>
</dbReference>
<dbReference type="Pfam" id="PF02540">
    <property type="entry name" value="NAD_synthase"/>
    <property type="match status" value="1"/>
</dbReference>
<dbReference type="PRINTS" id="PR00097">
    <property type="entry name" value="ANTSNTHASEII"/>
</dbReference>
<dbReference type="PRINTS" id="PR00096">
    <property type="entry name" value="GATASE"/>
</dbReference>
<dbReference type="SUPFAM" id="SSF52402">
    <property type="entry name" value="Adenine nucleotide alpha hydrolases-like"/>
    <property type="match status" value="1"/>
</dbReference>
<dbReference type="SUPFAM" id="SSF52317">
    <property type="entry name" value="Class I glutamine amidotransferase-like"/>
    <property type="match status" value="1"/>
</dbReference>
<dbReference type="SUPFAM" id="SSF54810">
    <property type="entry name" value="GMP synthetase C-terminal dimerisation domain"/>
    <property type="match status" value="1"/>
</dbReference>
<dbReference type="PROSITE" id="PS51273">
    <property type="entry name" value="GATASE_TYPE_1"/>
    <property type="match status" value="1"/>
</dbReference>
<dbReference type="PROSITE" id="PS51553">
    <property type="entry name" value="GMPS_ATP_PPASE"/>
    <property type="match status" value="1"/>
</dbReference>